<sequence length="1412" mass="155939">MKALLDLFKQVSQDEQFDAIKIGIASPEKIRSWSYGEVRKPETINYRTFKPERDGLFCSKIFGPIKDYECLCGKYKRLKHRGVICEKCGVEVTVAKVRRERMGHIELASPVAHIWFLKSLPSRLGMVLDMTLRDIERVLYFEAWCVIEPGMTPLKRGQIMSDDDFLAKTEEYGDDFRALMGAEAVRELLRTIDIDREVETLRGELKATSSEAKIKKISKRLKVLEGFQKSGIKAEWMVMEVLPVLPPDLRPLVPLDGGRFATSDLNDLYRRVINRNNRLKRLLELKAPEIILRNEKRMLQEAVDSLLDNGRRGKAMTGANKRQLKSLADMIKGKSGRFRQNLLGKRVDYSGRSVIVVGPQLKLHQCGLPKLMALELFKPFIFNRLEMMGLATTIKAAKKLVESQEPVVWDILEEVIREHPVMLNRAPTLHRLGIQAFEPVLIEGKAIQLHPLVCAAFNADFDGDQMAVHVPLSLEAQLEARTLMLASNNVLFPANGEPSIVPSQDIVLGLYYTTRERINGKGEGIFFTDVAEVQRAYDNGEVELQSRITVRLTEYERDDNGEFQPVLRRHETTVGRALLSEILPKGLPFTVLNKALKKKEISRLINQSFRRCGLRDTVIFADKLMQSGFRLATRGGISIAMGDMLIPKAKEGILAEASREVKEIDKQYSSGLVTSQERYNNVVDIWGKASDKVGKAMMEQLATEPVVNRHGEEVRQESFNSIYMMADSGARGSAAQIRQLAGMRGLMAKPDGSIIETPITANFREGLNVLQYFISTHGARKGLADTALKTANSGYLTRRLVDVTQDLVITEDDCGTTQGYAMKALVEGGEVIEPLRDRILGRVAAIDVVDPDTQETAIAAGTLLDEDLVDLIDRIGVDEVKVRTPLTCETRHGLCAHCYGRDLGRGSHVNVGEAVGVIAAQSIGEPGTQLTMRTFHIGGAASRSALASAVETKSTGKVGFASTMRYVTNAKGERVAISRSGELAIFDDNGRERERHKIPYGATVLVGDGEAVKAGTRLATWDPLTRPIVSEYGGAVRFENIEEGVTVAKQLDEITGLSTLVVITPKTRSGKTVTRPQIKLVNENGEDVKIAGTDHSVNISFPVGALITVRDGQQVAVGEVLARIPQESQKTRDITGGLPRVAELFEARSPKDAGMLADVTGTVSFGKDTKGKQRLVITDLEGVSHEFLIPKEKQVLVHDGQVVNKGEMIVDGPADPHDILRLQGIEKLATYIVDEVQDVYRLQGVKINDKHIEVIVRQMLRRVNIVDAGDTEFIPGEQVERSELLNENDRVTAEGKRPATYDNVLLGITKASLSTDSFISAASFQETTRVLTEAAIMGKRDDLRGLKENVIVGRLIPAGTGLAYHMARKDKEALEAAEREAARQLANPFEDAPVTVDADAPQSDAGQEGSAE</sequence>
<keyword id="KW-0240">DNA-directed RNA polymerase</keyword>
<keyword id="KW-0460">Magnesium</keyword>
<keyword id="KW-0479">Metal-binding</keyword>
<keyword id="KW-0548">Nucleotidyltransferase</keyword>
<keyword id="KW-0804">Transcription</keyword>
<keyword id="KW-0808">Transferase</keyword>
<keyword id="KW-0862">Zinc</keyword>
<dbReference type="EC" id="2.7.7.6" evidence="1"/>
<dbReference type="EMBL" id="AM902716">
    <property type="protein sequence ID" value="CAP45316.1"/>
    <property type="molecule type" value="Genomic_DNA"/>
</dbReference>
<dbReference type="SMR" id="A9IJ22"/>
<dbReference type="STRING" id="94624.Bpet4964"/>
<dbReference type="KEGG" id="bpt:Bpet4964"/>
<dbReference type="eggNOG" id="COG0086">
    <property type="taxonomic scope" value="Bacteria"/>
</dbReference>
<dbReference type="Proteomes" id="UP000001225">
    <property type="component" value="Chromosome"/>
</dbReference>
<dbReference type="GO" id="GO:0000428">
    <property type="term" value="C:DNA-directed RNA polymerase complex"/>
    <property type="evidence" value="ECO:0007669"/>
    <property type="project" value="UniProtKB-KW"/>
</dbReference>
<dbReference type="GO" id="GO:0003677">
    <property type="term" value="F:DNA binding"/>
    <property type="evidence" value="ECO:0007669"/>
    <property type="project" value="UniProtKB-UniRule"/>
</dbReference>
<dbReference type="GO" id="GO:0003899">
    <property type="term" value="F:DNA-directed RNA polymerase activity"/>
    <property type="evidence" value="ECO:0007669"/>
    <property type="project" value="UniProtKB-UniRule"/>
</dbReference>
<dbReference type="GO" id="GO:0000287">
    <property type="term" value="F:magnesium ion binding"/>
    <property type="evidence" value="ECO:0007669"/>
    <property type="project" value="UniProtKB-UniRule"/>
</dbReference>
<dbReference type="GO" id="GO:0008270">
    <property type="term" value="F:zinc ion binding"/>
    <property type="evidence" value="ECO:0007669"/>
    <property type="project" value="UniProtKB-UniRule"/>
</dbReference>
<dbReference type="GO" id="GO:0006351">
    <property type="term" value="P:DNA-templated transcription"/>
    <property type="evidence" value="ECO:0007669"/>
    <property type="project" value="UniProtKB-UniRule"/>
</dbReference>
<dbReference type="CDD" id="cd02655">
    <property type="entry name" value="RNAP_beta'_C"/>
    <property type="match status" value="1"/>
</dbReference>
<dbReference type="CDD" id="cd01609">
    <property type="entry name" value="RNAP_beta'_N"/>
    <property type="match status" value="1"/>
</dbReference>
<dbReference type="FunFam" id="1.10.132.30:FF:000003">
    <property type="entry name" value="DNA-directed RNA polymerase subunit beta"/>
    <property type="match status" value="1"/>
</dbReference>
<dbReference type="FunFam" id="1.10.150.390:FF:000002">
    <property type="entry name" value="DNA-directed RNA polymerase subunit beta"/>
    <property type="match status" value="1"/>
</dbReference>
<dbReference type="FunFam" id="4.10.860.120:FF:000001">
    <property type="entry name" value="DNA-directed RNA polymerase subunit beta"/>
    <property type="match status" value="1"/>
</dbReference>
<dbReference type="Gene3D" id="1.10.132.30">
    <property type="match status" value="1"/>
</dbReference>
<dbReference type="Gene3D" id="1.10.150.390">
    <property type="match status" value="1"/>
</dbReference>
<dbReference type="Gene3D" id="1.10.1790.20">
    <property type="match status" value="1"/>
</dbReference>
<dbReference type="Gene3D" id="1.10.40.90">
    <property type="match status" value="1"/>
</dbReference>
<dbReference type="Gene3D" id="2.40.40.20">
    <property type="match status" value="1"/>
</dbReference>
<dbReference type="Gene3D" id="2.40.50.100">
    <property type="match status" value="3"/>
</dbReference>
<dbReference type="Gene3D" id="4.10.860.120">
    <property type="entry name" value="RNA polymerase II, clamp domain"/>
    <property type="match status" value="1"/>
</dbReference>
<dbReference type="Gene3D" id="1.10.274.100">
    <property type="entry name" value="RNA polymerase Rpb1, domain 3"/>
    <property type="match status" value="1"/>
</dbReference>
<dbReference type="HAMAP" id="MF_01322">
    <property type="entry name" value="RNApol_bact_RpoC"/>
    <property type="match status" value="1"/>
</dbReference>
<dbReference type="InterPro" id="IPR045867">
    <property type="entry name" value="DNA-dir_RpoC_beta_prime"/>
</dbReference>
<dbReference type="InterPro" id="IPR012754">
    <property type="entry name" value="DNA-dir_RpoC_beta_prime_bact"/>
</dbReference>
<dbReference type="InterPro" id="IPR000722">
    <property type="entry name" value="RNA_pol_asu"/>
</dbReference>
<dbReference type="InterPro" id="IPR006592">
    <property type="entry name" value="RNA_pol_N"/>
</dbReference>
<dbReference type="InterPro" id="IPR007080">
    <property type="entry name" value="RNA_pol_Rpb1_1"/>
</dbReference>
<dbReference type="InterPro" id="IPR007066">
    <property type="entry name" value="RNA_pol_Rpb1_3"/>
</dbReference>
<dbReference type="InterPro" id="IPR042102">
    <property type="entry name" value="RNA_pol_Rpb1_3_sf"/>
</dbReference>
<dbReference type="InterPro" id="IPR007083">
    <property type="entry name" value="RNA_pol_Rpb1_4"/>
</dbReference>
<dbReference type="InterPro" id="IPR007081">
    <property type="entry name" value="RNA_pol_Rpb1_5"/>
</dbReference>
<dbReference type="InterPro" id="IPR044893">
    <property type="entry name" value="RNA_pol_Rpb1_clamp_domain"/>
</dbReference>
<dbReference type="InterPro" id="IPR038120">
    <property type="entry name" value="Rpb1_funnel_sf"/>
</dbReference>
<dbReference type="NCBIfam" id="TIGR02386">
    <property type="entry name" value="rpoC_TIGR"/>
    <property type="match status" value="1"/>
</dbReference>
<dbReference type="PANTHER" id="PTHR19376">
    <property type="entry name" value="DNA-DIRECTED RNA POLYMERASE"/>
    <property type="match status" value="1"/>
</dbReference>
<dbReference type="PANTHER" id="PTHR19376:SF54">
    <property type="entry name" value="DNA-DIRECTED RNA POLYMERASE SUBUNIT BETA"/>
    <property type="match status" value="1"/>
</dbReference>
<dbReference type="Pfam" id="PF04997">
    <property type="entry name" value="RNA_pol_Rpb1_1"/>
    <property type="match status" value="1"/>
</dbReference>
<dbReference type="Pfam" id="PF00623">
    <property type="entry name" value="RNA_pol_Rpb1_2"/>
    <property type="match status" value="2"/>
</dbReference>
<dbReference type="Pfam" id="PF04983">
    <property type="entry name" value="RNA_pol_Rpb1_3"/>
    <property type="match status" value="1"/>
</dbReference>
<dbReference type="Pfam" id="PF05000">
    <property type="entry name" value="RNA_pol_Rpb1_4"/>
    <property type="match status" value="1"/>
</dbReference>
<dbReference type="Pfam" id="PF04998">
    <property type="entry name" value="RNA_pol_Rpb1_5"/>
    <property type="match status" value="1"/>
</dbReference>
<dbReference type="SMART" id="SM00663">
    <property type="entry name" value="RPOLA_N"/>
    <property type="match status" value="1"/>
</dbReference>
<dbReference type="SUPFAM" id="SSF64484">
    <property type="entry name" value="beta and beta-prime subunits of DNA dependent RNA-polymerase"/>
    <property type="match status" value="1"/>
</dbReference>
<reference key="1">
    <citation type="journal article" date="2008" name="BMC Genomics">
        <title>The missing link: Bordetella petrii is endowed with both the metabolic versatility of environmental bacteria and virulence traits of pathogenic Bordetellae.</title>
        <authorList>
            <person name="Gross R."/>
            <person name="Guzman C.A."/>
            <person name="Sebaihia M."/>
            <person name="Martin dos Santos V.A.P."/>
            <person name="Pieper D.H."/>
            <person name="Koebnik R."/>
            <person name="Lechner M."/>
            <person name="Bartels D."/>
            <person name="Buhrmester J."/>
            <person name="Choudhuri J.V."/>
            <person name="Ebensen T."/>
            <person name="Gaigalat L."/>
            <person name="Herrmann S."/>
            <person name="Khachane A.N."/>
            <person name="Larisch C."/>
            <person name="Link S."/>
            <person name="Linke B."/>
            <person name="Meyer F."/>
            <person name="Mormann S."/>
            <person name="Nakunst D."/>
            <person name="Rueckert C."/>
            <person name="Schneiker-Bekel S."/>
            <person name="Schulze K."/>
            <person name="Voerholter F.-J."/>
            <person name="Yevsa T."/>
            <person name="Engle J.T."/>
            <person name="Goldman W.E."/>
            <person name="Puehler A."/>
            <person name="Goebel U.B."/>
            <person name="Goesmann A."/>
            <person name="Bloecker H."/>
            <person name="Kaiser O."/>
            <person name="Martinez-Arias R."/>
        </authorList>
    </citation>
    <scope>NUCLEOTIDE SEQUENCE [LARGE SCALE GENOMIC DNA]</scope>
    <source>
        <strain>ATCC BAA-461 / DSM 12804 / CCUG 43448</strain>
    </source>
</reference>
<feature type="chain" id="PRO_1000141762" description="DNA-directed RNA polymerase subunit beta'">
    <location>
        <begin position="1"/>
        <end position="1412"/>
    </location>
</feature>
<feature type="region of interest" description="Disordered" evidence="2">
    <location>
        <begin position="1378"/>
        <end position="1412"/>
    </location>
</feature>
<feature type="binding site" evidence="1">
    <location>
        <position position="70"/>
    </location>
    <ligand>
        <name>Zn(2+)</name>
        <dbReference type="ChEBI" id="CHEBI:29105"/>
        <label>1</label>
    </ligand>
</feature>
<feature type="binding site" evidence="1">
    <location>
        <position position="72"/>
    </location>
    <ligand>
        <name>Zn(2+)</name>
        <dbReference type="ChEBI" id="CHEBI:29105"/>
        <label>1</label>
    </ligand>
</feature>
<feature type="binding site" evidence="1">
    <location>
        <position position="85"/>
    </location>
    <ligand>
        <name>Zn(2+)</name>
        <dbReference type="ChEBI" id="CHEBI:29105"/>
        <label>1</label>
    </ligand>
</feature>
<feature type="binding site" evidence="1">
    <location>
        <position position="88"/>
    </location>
    <ligand>
        <name>Zn(2+)</name>
        <dbReference type="ChEBI" id="CHEBI:29105"/>
        <label>1</label>
    </ligand>
</feature>
<feature type="binding site" evidence="1">
    <location>
        <position position="460"/>
    </location>
    <ligand>
        <name>Mg(2+)</name>
        <dbReference type="ChEBI" id="CHEBI:18420"/>
    </ligand>
</feature>
<feature type="binding site" evidence="1">
    <location>
        <position position="462"/>
    </location>
    <ligand>
        <name>Mg(2+)</name>
        <dbReference type="ChEBI" id="CHEBI:18420"/>
    </ligand>
</feature>
<feature type="binding site" evidence="1">
    <location>
        <position position="464"/>
    </location>
    <ligand>
        <name>Mg(2+)</name>
        <dbReference type="ChEBI" id="CHEBI:18420"/>
    </ligand>
</feature>
<feature type="binding site" evidence="1">
    <location>
        <position position="814"/>
    </location>
    <ligand>
        <name>Zn(2+)</name>
        <dbReference type="ChEBI" id="CHEBI:29105"/>
        <label>2</label>
    </ligand>
</feature>
<feature type="binding site" evidence="1">
    <location>
        <position position="888"/>
    </location>
    <ligand>
        <name>Zn(2+)</name>
        <dbReference type="ChEBI" id="CHEBI:29105"/>
        <label>2</label>
    </ligand>
</feature>
<feature type="binding site" evidence="1">
    <location>
        <position position="895"/>
    </location>
    <ligand>
        <name>Zn(2+)</name>
        <dbReference type="ChEBI" id="CHEBI:29105"/>
        <label>2</label>
    </ligand>
</feature>
<feature type="binding site" evidence="1">
    <location>
        <position position="898"/>
    </location>
    <ligand>
        <name>Zn(2+)</name>
        <dbReference type="ChEBI" id="CHEBI:29105"/>
        <label>2</label>
    </ligand>
</feature>
<comment type="function">
    <text evidence="1">DNA-dependent RNA polymerase catalyzes the transcription of DNA into RNA using the four ribonucleoside triphosphates as substrates.</text>
</comment>
<comment type="catalytic activity">
    <reaction evidence="1">
        <text>RNA(n) + a ribonucleoside 5'-triphosphate = RNA(n+1) + diphosphate</text>
        <dbReference type="Rhea" id="RHEA:21248"/>
        <dbReference type="Rhea" id="RHEA-COMP:14527"/>
        <dbReference type="Rhea" id="RHEA-COMP:17342"/>
        <dbReference type="ChEBI" id="CHEBI:33019"/>
        <dbReference type="ChEBI" id="CHEBI:61557"/>
        <dbReference type="ChEBI" id="CHEBI:140395"/>
        <dbReference type="EC" id="2.7.7.6"/>
    </reaction>
</comment>
<comment type="cofactor">
    <cofactor evidence="1">
        <name>Mg(2+)</name>
        <dbReference type="ChEBI" id="CHEBI:18420"/>
    </cofactor>
    <text evidence="1">Binds 1 Mg(2+) ion per subunit.</text>
</comment>
<comment type="cofactor">
    <cofactor evidence="1">
        <name>Zn(2+)</name>
        <dbReference type="ChEBI" id="CHEBI:29105"/>
    </cofactor>
    <text evidence="1">Binds 2 Zn(2+) ions per subunit.</text>
</comment>
<comment type="subunit">
    <text evidence="1">The RNAP catalytic core consists of 2 alpha, 1 beta, 1 beta' and 1 omega subunit. When a sigma factor is associated with the core the holoenzyme is formed, which can initiate transcription.</text>
</comment>
<comment type="similarity">
    <text evidence="1">Belongs to the RNA polymerase beta' chain family.</text>
</comment>
<protein>
    <recommendedName>
        <fullName evidence="1">DNA-directed RNA polymerase subunit beta'</fullName>
        <shortName evidence="1">RNAP subunit beta'</shortName>
        <ecNumber evidence="1">2.7.7.6</ecNumber>
    </recommendedName>
    <alternativeName>
        <fullName evidence="1">RNA polymerase subunit beta'</fullName>
    </alternativeName>
    <alternativeName>
        <fullName evidence="1">Transcriptase subunit beta'</fullName>
    </alternativeName>
</protein>
<name>RPOC_BORPD</name>
<evidence type="ECO:0000255" key="1">
    <source>
        <dbReference type="HAMAP-Rule" id="MF_01322"/>
    </source>
</evidence>
<evidence type="ECO:0000256" key="2">
    <source>
        <dbReference type="SAM" id="MobiDB-lite"/>
    </source>
</evidence>
<accession>A9IJ22</accession>
<organism>
    <name type="scientific">Bordetella petrii (strain ATCC BAA-461 / DSM 12804 / CCUG 43448)</name>
    <dbReference type="NCBI Taxonomy" id="340100"/>
    <lineage>
        <taxon>Bacteria</taxon>
        <taxon>Pseudomonadati</taxon>
        <taxon>Pseudomonadota</taxon>
        <taxon>Betaproteobacteria</taxon>
        <taxon>Burkholderiales</taxon>
        <taxon>Alcaligenaceae</taxon>
        <taxon>Bordetella</taxon>
    </lineage>
</organism>
<gene>
    <name evidence="1" type="primary">rpoC</name>
    <name type="ordered locus">Bpet4964</name>
</gene>
<proteinExistence type="inferred from homology"/>